<protein>
    <recommendedName>
        <fullName evidence="1">Small ribosomal subunit protein uS11</fullName>
    </recommendedName>
    <alternativeName>
        <fullName evidence="2">30S ribosomal protein S11</fullName>
    </alternativeName>
</protein>
<feature type="chain" id="PRO_1000165535" description="Small ribosomal subunit protein uS11">
    <location>
        <begin position="1"/>
        <end position="131"/>
    </location>
</feature>
<organism>
    <name type="scientific">Buchnera aphidicola subsp. Acyrthosiphon pisum (strain 5A)</name>
    <dbReference type="NCBI Taxonomy" id="563178"/>
    <lineage>
        <taxon>Bacteria</taxon>
        <taxon>Pseudomonadati</taxon>
        <taxon>Pseudomonadota</taxon>
        <taxon>Gammaproteobacteria</taxon>
        <taxon>Enterobacterales</taxon>
        <taxon>Erwiniaceae</taxon>
        <taxon>Buchnera</taxon>
    </lineage>
</organism>
<dbReference type="EMBL" id="CP001161">
    <property type="protein sequence ID" value="ACL30845.1"/>
    <property type="molecule type" value="Genomic_DNA"/>
</dbReference>
<dbReference type="RefSeq" id="WP_009874452.1">
    <property type="nucleotide sequence ID" value="NC_011833.1"/>
</dbReference>
<dbReference type="SMR" id="B8D9S4"/>
<dbReference type="KEGG" id="bap:BUAP5A_494"/>
<dbReference type="HOGENOM" id="CLU_072439_5_0_6"/>
<dbReference type="OrthoDB" id="9806415at2"/>
<dbReference type="Proteomes" id="UP000006904">
    <property type="component" value="Chromosome"/>
</dbReference>
<dbReference type="GO" id="GO:1990904">
    <property type="term" value="C:ribonucleoprotein complex"/>
    <property type="evidence" value="ECO:0007669"/>
    <property type="project" value="UniProtKB-KW"/>
</dbReference>
<dbReference type="GO" id="GO:0005840">
    <property type="term" value="C:ribosome"/>
    <property type="evidence" value="ECO:0007669"/>
    <property type="project" value="UniProtKB-KW"/>
</dbReference>
<dbReference type="GO" id="GO:0019843">
    <property type="term" value="F:rRNA binding"/>
    <property type="evidence" value="ECO:0007669"/>
    <property type="project" value="UniProtKB-UniRule"/>
</dbReference>
<dbReference type="GO" id="GO:0003735">
    <property type="term" value="F:structural constituent of ribosome"/>
    <property type="evidence" value="ECO:0007669"/>
    <property type="project" value="InterPro"/>
</dbReference>
<dbReference type="GO" id="GO:0006412">
    <property type="term" value="P:translation"/>
    <property type="evidence" value="ECO:0007669"/>
    <property type="project" value="UniProtKB-UniRule"/>
</dbReference>
<dbReference type="FunFam" id="3.30.420.80:FF:000001">
    <property type="entry name" value="30S ribosomal protein S11"/>
    <property type="match status" value="1"/>
</dbReference>
<dbReference type="Gene3D" id="3.30.420.80">
    <property type="entry name" value="Ribosomal protein S11"/>
    <property type="match status" value="1"/>
</dbReference>
<dbReference type="HAMAP" id="MF_01310">
    <property type="entry name" value="Ribosomal_uS11"/>
    <property type="match status" value="1"/>
</dbReference>
<dbReference type="InterPro" id="IPR001971">
    <property type="entry name" value="Ribosomal_uS11"/>
</dbReference>
<dbReference type="InterPro" id="IPR019981">
    <property type="entry name" value="Ribosomal_uS11_bac-type"/>
</dbReference>
<dbReference type="InterPro" id="IPR018102">
    <property type="entry name" value="Ribosomal_uS11_CS"/>
</dbReference>
<dbReference type="InterPro" id="IPR036967">
    <property type="entry name" value="Ribosomal_uS11_sf"/>
</dbReference>
<dbReference type="NCBIfam" id="NF003698">
    <property type="entry name" value="PRK05309.1"/>
    <property type="match status" value="1"/>
</dbReference>
<dbReference type="NCBIfam" id="TIGR03632">
    <property type="entry name" value="uS11_bact"/>
    <property type="match status" value="1"/>
</dbReference>
<dbReference type="PANTHER" id="PTHR11759">
    <property type="entry name" value="40S RIBOSOMAL PROTEIN S14/30S RIBOSOMAL PROTEIN S11"/>
    <property type="match status" value="1"/>
</dbReference>
<dbReference type="Pfam" id="PF00411">
    <property type="entry name" value="Ribosomal_S11"/>
    <property type="match status" value="1"/>
</dbReference>
<dbReference type="PIRSF" id="PIRSF002131">
    <property type="entry name" value="Ribosomal_S11"/>
    <property type="match status" value="1"/>
</dbReference>
<dbReference type="SUPFAM" id="SSF53137">
    <property type="entry name" value="Translational machinery components"/>
    <property type="match status" value="1"/>
</dbReference>
<dbReference type="PROSITE" id="PS00054">
    <property type="entry name" value="RIBOSOMAL_S11"/>
    <property type="match status" value="1"/>
</dbReference>
<proteinExistence type="inferred from homology"/>
<sequence length="131" mass="14208">MVKNSTSIRTRKRVKKQILDGIAHIHASFNNTIVTITDRQGNALGWATSGGSGFRGSRKSTPFAAQVAAERCAEIVKDYGIKNLEVMVKGPGPGRESTIRALNAAGFRITNITDVTPIPHNGCRPPKKRRV</sequence>
<evidence type="ECO:0000255" key="1">
    <source>
        <dbReference type="HAMAP-Rule" id="MF_01310"/>
    </source>
</evidence>
<evidence type="ECO:0000305" key="2"/>
<gene>
    <name evidence="1" type="primary">rpsK</name>
    <name type="ordered locus">BUAP5A_494</name>
</gene>
<name>RS11_BUCA5</name>
<reference key="1">
    <citation type="journal article" date="2009" name="Science">
        <title>The dynamics and time scale of ongoing genomic erosion in symbiotic bacteria.</title>
        <authorList>
            <person name="Moran N.A."/>
            <person name="McLaughlin H.J."/>
            <person name="Sorek R."/>
        </authorList>
    </citation>
    <scope>NUCLEOTIDE SEQUENCE [LARGE SCALE GENOMIC DNA]</scope>
    <source>
        <strain>5A</strain>
    </source>
</reference>
<accession>B8D9S4</accession>
<keyword id="KW-0687">Ribonucleoprotein</keyword>
<keyword id="KW-0689">Ribosomal protein</keyword>
<keyword id="KW-0694">RNA-binding</keyword>
<keyword id="KW-0699">rRNA-binding</keyword>
<comment type="function">
    <text evidence="1">Located on the platform of the 30S subunit, it bridges several disparate RNA helices of the 16S rRNA. Forms part of the Shine-Dalgarno cleft in the 70S ribosome.</text>
</comment>
<comment type="subunit">
    <text evidence="1">Part of the 30S ribosomal subunit. Interacts with proteins S7 and S18. Binds to IF-3.</text>
</comment>
<comment type="similarity">
    <text evidence="1">Belongs to the universal ribosomal protein uS11 family.</text>
</comment>